<feature type="chain" id="PRO_0000405269" description="BTB/POZ and MATH domain-containing protein 5">
    <location>
        <begin position="1"/>
        <end position="410"/>
    </location>
</feature>
<feature type="domain" description="MATH" evidence="3">
    <location>
        <begin position="28"/>
        <end position="162"/>
    </location>
</feature>
<feature type="domain" description="BTB" evidence="2">
    <location>
        <begin position="198"/>
        <end position="264"/>
    </location>
</feature>
<feature type="region of interest" description="Disordered" evidence="4">
    <location>
        <begin position="1"/>
        <end position="24"/>
    </location>
</feature>
<feature type="sequence conflict" description="In Ref. 5; AAM61175." evidence="8" ref="5">
    <original>V</original>
    <variation>I</variation>
    <location>
        <position position="57"/>
    </location>
</feature>
<organism>
    <name type="scientific">Arabidopsis thaliana</name>
    <name type="common">Mouse-ear cress</name>
    <dbReference type="NCBI Taxonomy" id="3702"/>
    <lineage>
        <taxon>Eukaryota</taxon>
        <taxon>Viridiplantae</taxon>
        <taxon>Streptophyta</taxon>
        <taxon>Embryophyta</taxon>
        <taxon>Tracheophyta</taxon>
        <taxon>Spermatophyta</taxon>
        <taxon>Magnoliopsida</taxon>
        <taxon>eudicotyledons</taxon>
        <taxon>Gunneridae</taxon>
        <taxon>Pentapetalae</taxon>
        <taxon>rosids</taxon>
        <taxon>malvids</taxon>
        <taxon>Brassicales</taxon>
        <taxon>Brassicaceae</taxon>
        <taxon>Camelineae</taxon>
        <taxon>Arabidopsis</taxon>
    </lineage>
</organism>
<sequence>MSESVIQGSNPDRVLSPTSSKSVTQTVNGSHQFVIQGYSLAKGMGIGKHIASDNFSVGGYQWGIFFYPDGKNPEDNSSYVSVFIALASEGTEVRALFELALVDQSGKGKHKVHSHFERSLDGGPYTLKYRGSMWGYKRFFRRSILETSDYLKDDCLIINCTVGVVVSEILCPQLHSVHVPDSELGSHFGVLLDSMEGSDITFNIAGEKFLAHKLVLAARSPFFKSKFFSEFEANNTEVTINDLEPKVFKALLQFMYKDSLPEDVEPATAHTFERLKLSEIYETLIVKVLAAADKYDLIRLRLLCESHICKGVSVKSVAKILALADRYNAKELKGVCLKFTAENLAAVLETDAYQQMKDECVTLQSELLKAVAGHEEGSNSTGGAKSQSVWAQLSDGGGDTTSRHVRQRTT</sequence>
<name>BPM5_ARATH</name>
<gene>
    <name type="primary">BPM5</name>
    <name type="ordered locus">At5g21010</name>
    <name type="ORF">F22D1</name>
    <name type="ORF">T10F18.30</name>
</gene>
<protein>
    <recommendedName>
        <fullName>BTB/POZ and MATH domain-containing protein 5</fullName>
    </recommendedName>
    <alternativeName>
        <fullName>Protein BTB-POZ AND MATH DOMAIN 5</fullName>
        <shortName>AtBPM5</shortName>
    </alternativeName>
</protein>
<evidence type="ECO:0000250" key="1"/>
<evidence type="ECO:0000255" key="2">
    <source>
        <dbReference type="PROSITE-ProRule" id="PRU00037"/>
    </source>
</evidence>
<evidence type="ECO:0000255" key="3">
    <source>
        <dbReference type="PROSITE-ProRule" id="PRU00129"/>
    </source>
</evidence>
<evidence type="ECO:0000256" key="4">
    <source>
        <dbReference type="SAM" id="MobiDB-lite"/>
    </source>
</evidence>
<evidence type="ECO:0000269" key="5">
    <source>
    </source>
</evidence>
<evidence type="ECO:0000269" key="6">
    <source>
    </source>
</evidence>
<evidence type="ECO:0000269" key="7">
    <source>
    </source>
</evidence>
<evidence type="ECO:0000305" key="8"/>
<keyword id="KW-0963">Cytoplasm</keyword>
<keyword id="KW-0539">Nucleus</keyword>
<keyword id="KW-1185">Reference proteome</keyword>
<keyword id="KW-0833">Ubl conjugation pathway</keyword>
<comment type="function">
    <text evidence="1">May act as a substrate-specific adapter of an E3 ubiquitin-protein ligase complex (CUL3-RBX1-BTB) which mediates the ubiquitination and subsequent proteasomal degradation of target proteins.</text>
</comment>
<comment type="pathway">
    <text>Protein modification; protein ubiquitination.</text>
</comment>
<comment type="subunit">
    <text evidence="5 6 7">Heterodimer with BPM1 and BPM3. Interacts with RAP2-4. Binds to MYB56 at the promoter of FLOWERING LOCUS T (FT) (PubMed:25343985).</text>
</comment>
<comment type="interaction">
    <interactant intactId="EBI-630650">
        <id>Q1EBV6</id>
    </interactant>
    <interactant intactId="EBI-7529041">
        <id>O65665</id>
        <label>ERF060</label>
    </interactant>
    <organismsDiffer>false</organismsDiffer>
    <experiments>3</experiments>
</comment>
<comment type="subcellular location">
    <subcellularLocation>
        <location evidence="6">Nucleus</location>
    </subcellularLocation>
    <subcellularLocation>
        <location evidence="6">Cytoplasm</location>
    </subcellularLocation>
</comment>
<comment type="tissue specificity">
    <text evidence="5 6">Ubiquitous.</text>
</comment>
<comment type="induction">
    <text evidence="6">By drought.</text>
</comment>
<comment type="domain">
    <text>The BTB/POZ domain mediates the interaction with some component of ubiquitin ligase complexes.</text>
</comment>
<comment type="similarity">
    <text evidence="8">Belongs to the Tdpoz family.</text>
</comment>
<comment type="sequence caution" evidence="8">
    <conflict type="frameshift">
        <sequence resource="EMBL-CDS" id="AAK68819"/>
    </conflict>
</comment>
<proteinExistence type="evidence at protein level"/>
<dbReference type="EMBL" id="AC069325">
    <property type="status" value="NOT_ANNOTATED_CDS"/>
    <property type="molecule type" value="Genomic_DNA"/>
</dbReference>
<dbReference type="EMBL" id="AF296834">
    <property type="status" value="NOT_ANNOTATED_CDS"/>
    <property type="molecule type" value="Genomic_DNA"/>
</dbReference>
<dbReference type="EMBL" id="CP002688">
    <property type="protein sequence ID" value="AED92919.1"/>
    <property type="molecule type" value="Genomic_DNA"/>
</dbReference>
<dbReference type="EMBL" id="AY042879">
    <property type="protein sequence ID" value="AAK68819.1"/>
    <property type="status" value="ALT_FRAME"/>
    <property type="molecule type" value="mRNA"/>
</dbReference>
<dbReference type="EMBL" id="BT025978">
    <property type="protein sequence ID" value="ABG25067.1"/>
    <property type="molecule type" value="mRNA"/>
</dbReference>
<dbReference type="EMBL" id="AY084611">
    <property type="protein sequence ID" value="AAM61175.1"/>
    <property type="molecule type" value="mRNA"/>
</dbReference>
<dbReference type="RefSeq" id="NP_197600.1">
    <property type="nucleotide sequence ID" value="NM_122109.4"/>
</dbReference>
<dbReference type="SMR" id="Q1EBV6"/>
<dbReference type="BioGRID" id="17500">
    <property type="interactions" value="6"/>
</dbReference>
<dbReference type="FunCoup" id="Q1EBV6">
    <property type="interactions" value="1690"/>
</dbReference>
<dbReference type="IntAct" id="Q1EBV6">
    <property type="interactions" value="4"/>
</dbReference>
<dbReference type="MINT" id="Q1EBV6"/>
<dbReference type="STRING" id="3702.Q1EBV6"/>
<dbReference type="iPTMnet" id="Q1EBV6"/>
<dbReference type="PaxDb" id="3702-AT5G21010.1"/>
<dbReference type="ProteomicsDB" id="240361"/>
<dbReference type="EnsemblPlants" id="AT5G21010.1">
    <property type="protein sequence ID" value="AT5G21010.1"/>
    <property type="gene ID" value="AT5G21010"/>
</dbReference>
<dbReference type="GeneID" id="832225"/>
<dbReference type="Gramene" id="AT5G21010.1">
    <property type="protein sequence ID" value="AT5G21010.1"/>
    <property type="gene ID" value="AT5G21010"/>
</dbReference>
<dbReference type="KEGG" id="ath:AT5G21010"/>
<dbReference type="Araport" id="AT5G21010"/>
<dbReference type="TAIR" id="AT5G21010">
    <property type="gene designation" value="BPM5"/>
</dbReference>
<dbReference type="eggNOG" id="KOG1987">
    <property type="taxonomic scope" value="Eukaryota"/>
</dbReference>
<dbReference type="HOGENOM" id="CLU_004253_2_0_1"/>
<dbReference type="InParanoid" id="Q1EBV6"/>
<dbReference type="OMA" id="SKFFNEP"/>
<dbReference type="OrthoDB" id="6359816at2759"/>
<dbReference type="PhylomeDB" id="Q1EBV6"/>
<dbReference type="UniPathway" id="UPA00143"/>
<dbReference type="PRO" id="PR:Q1EBV6"/>
<dbReference type="Proteomes" id="UP000006548">
    <property type="component" value="Chromosome 5"/>
</dbReference>
<dbReference type="ExpressionAtlas" id="Q1EBV6">
    <property type="expression patterns" value="baseline and differential"/>
</dbReference>
<dbReference type="GO" id="GO:0005829">
    <property type="term" value="C:cytosol"/>
    <property type="evidence" value="ECO:0000314"/>
    <property type="project" value="TAIR"/>
</dbReference>
<dbReference type="GO" id="GO:0005634">
    <property type="term" value="C:nucleus"/>
    <property type="evidence" value="ECO:0000314"/>
    <property type="project" value="TAIR"/>
</dbReference>
<dbReference type="GO" id="GO:0071472">
    <property type="term" value="P:cellular response to salt stress"/>
    <property type="evidence" value="ECO:0000270"/>
    <property type="project" value="TAIR"/>
</dbReference>
<dbReference type="GO" id="GO:0042631">
    <property type="term" value="P:cellular response to water deprivation"/>
    <property type="evidence" value="ECO:0000270"/>
    <property type="project" value="TAIR"/>
</dbReference>
<dbReference type="GO" id="GO:0016567">
    <property type="term" value="P:protein ubiquitination"/>
    <property type="evidence" value="ECO:0007669"/>
    <property type="project" value="UniProtKB-UniPathway"/>
</dbReference>
<dbReference type="GO" id="GO:0006970">
    <property type="term" value="P:response to osmotic stress"/>
    <property type="evidence" value="ECO:0000270"/>
    <property type="project" value="TAIR"/>
</dbReference>
<dbReference type="CDD" id="cd14736">
    <property type="entry name" value="BACK_AtBPM-like"/>
    <property type="match status" value="1"/>
</dbReference>
<dbReference type="CDD" id="cd18280">
    <property type="entry name" value="BTB_POZ_BPM_plant"/>
    <property type="match status" value="1"/>
</dbReference>
<dbReference type="CDD" id="cd00121">
    <property type="entry name" value="MATH"/>
    <property type="match status" value="1"/>
</dbReference>
<dbReference type="FunFam" id="1.25.40.420:FF:000023">
    <property type="entry name" value="BTB-POZ and math domain 1"/>
    <property type="match status" value="1"/>
</dbReference>
<dbReference type="FunFam" id="3.30.710.10:FF:000136">
    <property type="entry name" value="BTB-POZ and math domain 1"/>
    <property type="match status" value="1"/>
</dbReference>
<dbReference type="FunFam" id="2.60.210.10:FF:000012">
    <property type="entry name" value="BTB/POZ and MATH domain-containing protein 4"/>
    <property type="match status" value="1"/>
</dbReference>
<dbReference type="Gene3D" id="1.25.40.420">
    <property type="match status" value="1"/>
</dbReference>
<dbReference type="Gene3D" id="2.60.210.10">
    <property type="entry name" value="Apoptosis, Tumor Necrosis Factor Receptor Associated Protein 2, Chain A"/>
    <property type="match status" value="1"/>
</dbReference>
<dbReference type="Gene3D" id="3.30.710.10">
    <property type="entry name" value="Potassium Channel Kv1.1, Chain A"/>
    <property type="match status" value="1"/>
</dbReference>
<dbReference type="InterPro" id="IPR056423">
    <property type="entry name" value="BACK_BPM_SPOP"/>
</dbReference>
<dbReference type="InterPro" id="IPR045005">
    <property type="entry name" value="BPM1-6"/>
</dbReference>
<dbReference type="InterPro" id="IPR034090">
    <property type="entry name" value="BPM_C"/>
</dbReference>
<dbReference type="InterPro" id="IPR000210">
    <property type="entry name" value="BTB/POZ_dom"/>
</dbReference>
<dbReference type="InterPro" id="IPR002083">
    <property type="entry name" value="MATH/TRAF_dom"/>
</dbReference>
<dbReference type="InterPro" id="IPR011333">
    <property type="entry name" value="SKP1/BTB/POZ_sf"/>
</dbReference>
<dbReference type="InterPro" id="IPR008974">
    <property type="entry name" value="TRAF-like"/>
</dbReference>
<dbReference type="PANTHER" id="PTHR26379">
    <property type="entry name" value="BTB/POZ AND MATH DOMAIN-CONTAINING PROTEIN 1"/>
    <property type="match status" value="1"/>
</dbReference>
<dbReference type="PANTHER" id="PTHR26379:SF229">
    <property type="entry name" value="BTB_POZ AND MATH DOMAIN-CONTAINING PROTEIN 5-RELATED"/>
    <property type="match status" value="1"/>
</dbReference>
<dbReference type="Pfam" id="PF24570">
    <property type="entry name" value="BACK_BPM_SPOP"/>
    <property type="match status" value="1"/>
</dbReference>
<dbReference type="Pfam" id="PF00651">
    <property type="entry name" value="BTB"/>
    <property type="match status" value="1"/>
</dbReference>
<dbReference type="Pfam" id="PF22486">
    <property type="entry name" value="MATH_2"/>
    <property type="match status" value="1"/>
</dbReference>
<dbReference type="SMART" id="SM00225">
    <property type="entry name" value="BTB"/>
    <property type="match status" value="1"/>
</dbReference>
<dbReference type="SMART" id="SM00061">
    <property type="entry name" value="MATH"/>
    <property type="match status" value="1"/>
</dbReference>
<dbReference type="SUPFAM" id="SSF54695">
    <property type="entry name" value="POZ domain"/>
    <property type="match status" value="1"/>
</dbReference>
<dbReference type="SUPFAM" id="SSF49599">
    <property type="entry name" value="TRAF domain-like"/>
    <property type="match status" value="1"/>
</dbReference>
<dbReference type="PROSITE" id="PS50097">
    <property type="entry name" value="BTB"/>
    <property type="match status" value="1"/>
</dbReference>
<dbReference type="PROSITE" id="PS50144">
    <property type="entry name" value="MATH"/>
    <property type="match status" value="1"/>
</dbReference>
<accession>Q1EBV6</accession>
<accession>Q8LFW4</accession>
<accession>Q94B33</accession>
<reference key="1">
    <citation type="journal article" date="2000" name="Nature">
        <title>Sequence and analysis of chromosome 5 of the plant Arabidopsis thaliana.</title>
        <authorList>
            <person name="Tabata S."/>
            <person name="Kaneko T."/>
            <person name="Nakamura Y."/>
            <person name="Kotani H."/>
            <person name="Kato T."/>
            <person name="Asamizu E."/>
            <person name="Miyajima N."/>
            <person name="Sasamoto S."/>
            <person name="Kimura T."/>
            <person name="Hosouchi T."/>
            <person name="Kawashima K."/>
            <person name="Kohara M."/>
            <person name="Matsumoto M."/>
            <person name="Matsuno A."/>
            <person name="Muraki A."/>
            <person name="Nakayama S."/>
            <person name="Nakazaki N."/>
            <person name="Naruo K."/>
            <person name="Okumura S."/>
            <person name="Shinpo S."/>
            <person name="Takeuchi C."/>
            <person name="Wada T."/>
            <person name="Watanabe A."/>
            <person name="Yamada M."/>
            <person name="Yasuda M."/>
            <person name="Sato S."/>
            <person name="de la Bastide M."/>
            <person name="Huang E."/>
            <person name="Spiegel L."/>
            <person name="Gnoj L."/>
            <person name="O'Shaughnessy A."/>
            <person name="Preston R."/>
            <person name="Habermann K."/>
            <person name="Murray J."/>
            <person name="Johnson D."/>
            <person name="Rohlfing T."/>
            <person name="Nelson J."/>
            <person name="Stoneking T."/>
            <person name="Pepin K."/>
            <person name="Spieth J."/>
            <person name="Sekhon M."/>
            <person name="Armstrong J."/>
            <person name="Becker M."/>
            <person name="Belter E."/>
            <person name="Cordum H."/>
            <person name="Cordes M."/>
            <person name="Courtney L."/>
            <person name="Courtney W."/>
            <person name="Dante M."/>
            <person name="Du H."/>
            <person name="Edwards J."/>
            <person name="Fryman J."/>
            <person name="Haakensen B."/>
            <person name="Lamar E."/>
            <person name="Latreille P."/>
            <person name="Leonard S."/>
            <person name="Meyer R."/>
            <person name="Mulvaney E."/>
            <person name="Ozersky P."/>
            <person name="Riley A."/>
            <person name="Strowmatt C."/>
            <person name="Wagner-McPherson C."/>
            <person name="Wollam A."/>
            <person name="Yoakum M."/>
            <person name="Bell M."/>
            <person name="Dedhia N."/>
            <person name="Parnell L."/>
            <person name="Shah R."/>
            <person name="Rodriguez M."/>
            <person name="Hoon See L."/>
            <person name="Vil D."/>
            <person name="Baker J."/>
            <person name="Kirchoff K."/>
            <person name="Toth K."/>
            <person name="King L."/>
            <person name="Bahret A."/>
            <person name="Miller B."/>
            <person name="Marra M.A."/>
            <person name="Martienssen R."/>
            <person name="McCombie W.R."/>
            <person name="Wilson R.K."/>
            <person name="Murphy G."/>
            <person name="Bancroft I."/>
            <person name="Volckaert G."/>
            <person name="Wambutt R."/>
            <person name="Duesterhoeft A."/>
            <person name="Stiekema W."/>
            <person name="Pohl T."/>
            <person name="Entian K.-D."/>
            <person name="Terryn N."/>
            <person name="Hartley N."/>
            <person name="Bent E."/>
            <person name="Johnson S."/>
            <person name="Langham S.-A."/>
            <person name="McCullagh B."/>
            <person name="Robben J."/>
            <person name="Grymonprez B."/>
            <person name="Zimmermann W."/>
            <person name="Ramsperger U."/>
            <person name="Wedler H."/>
            <person name="Balke K."/>
            <person name="Wedler E."/>
            <person name="Peters S."/>
            <person name="van Staveren M."/>
            <person name="Dirkse W."/>
            <person name="Mooijman P."/>
            <person name="Klein Lankhorst R."/>
            <person name="Weitzenegger T."/>
            <person name="Bothe G."/>
            <person name="Rose M."/>
            <person name="Hauf J."/>
            <person name="Berneiser S."/>
            <person name="Hempel S."/>
            <person name="Feldpausch M."/>
            <person name="Lamberth S."/>
            <person name="Villarroel R."/>
            <person name="Gielen J."/>
            <person name="Ardiles W."/>
            <person name="Bents O."/>
            <person name="Lemcke K."/>
            <person name="Kolesov G."/>
            <person name="Mayer K.F.X."/>
            <person name="Rudd S."/>
            <person name="Schoof H."/>
            <person name="Schueller C."/>
            <person name="Zaccaria P."/>
            <person name="Mewes H.-W."/>
            <person name="Bevan M."/>
            <person name="Fransz P.F."/>
        </authorList>
    </citation>
    <scope>NUCLEOTIDE SEQUENCE [LARGE SCALE GENOMIC DNA]</scope>
    <source>
        <strain>cv. Columbia</strain>
    </source>
</reference>
<reference key="2">
    <citation type="journal article" date="2017" name="Plant J.">
        <title>Araport11: a complete reannotation of the Arabidopsis thaliana reference genome.</title>
        <authorList>
            <person name="Cheng C.Y."/>
            <person name="Krishnakumar V."/>
            <person name="Chan A.P."/>
            <person name="Thibaud-Nissen F."/>
            <person name="Schobel S."/>
            <person name="Town C.D."/>
        </authorList>
    </citation>
    <scope>GENOME REANNOTATION</scope>
    <source>
        <strain>cv. Columbia</strain>
    </source>
</reference>
<reference key="3">
    <citation type="journal article" date="2003" name="Science">
        <title>Empirical analysis of transcriptional activity in the Arabidopsis genome.</title>
        <authorList>
            <person name="Yamada K."/>
            <person name="Lim J."/>
            <person name="Dale J.M."/>
            <person name="Chen H."/>
            <person name="Shinn P."/>
            <person name="Palm C.J."/>
            <person name="Southwick A.M."/>
            <person name="Wu H.C."/>
            <person name="Kim C.J."/>
            <person name="Nguyen M."/>
            <person name="Pham P.K."/>
            <person name="Cheuk R.F."/>
            <person name="Karlin-Newmann G."/>
            <person name="Liu S.X."/>
            <person name="Lam B."/>
            <person name="Sakano H."/>
            <person name="Wu T."/>
            <person name="Yu G."/>
            <person name="Miranda M."/>
            <person name="Quach H.L."/>
            <person name="Tripp M."/>
            <person name="Chang C.H."/>
            <person name="Lee J.M."/>
            <person name="Toriumi M.J."/>
            <person name="Chan M.M."/>
            <person name="Tang C.C."/>
            <person name="Onodera C.S."/>
            <person name="Deng J.M."/>
            <person name="Akiyama K."/>
            <person name="Ansari Y."/>
            <person name="Arakawa T."/>
            <person name="Banh J."/>
            <person name="Banno F."/>
            <person name="Bowser L."/>
            <person name="Brooks S.Y."/>
            <person name="Carninci P."/>
            <person name="Chao Q."/>
            <person name="Choy N."/>
            <person name="Enju A."/>
            <person name="Goldsmith A.D."/>
            <person name="Gurjal M."/>
            <person name="Hansen N.F."/>
            <person name="Hayashizaki Y."/>
            <person name="Johnson-Hopson C."/>
            <person name="Hsuan V.W."/>
            <person name="Iida K."/>
            <person name="Karnes M."/>
            <person name="Khan S."/>
            <person name="Koesema E."/>
            <person name="Ishida J."/>
            <person name="Jiang P.X."/>
            <person name="Jones T."/>
            <person name="Kawai J."/>
            <person name="Kamiya A."/>
            <person name="Meyers C."/>
            <person name="Nakajima M."/>
            <person name="Narusaka M."/>
            <person name="Seki M."/>
            <person name="Sakurai T."/>
            <person name="Satou M."/>
            <person name="Tamse R."/>
            <person name="Vaysberg M."/>
            <person name="Wallender E.K."/>
            <person name="Wong C."/>
            <person name="Yamamura Y."/>
            <person name="Yuan S."/>
            <person name="Shinozaki K."/>
            <person name="Davis R.W."/>
            <person name="Theologis A."/>
            <person name="Ecker J.R."/>
        </authorList>
    </citation>
    <scope>NUCLEOTIDE SEQUENCE [LARGE SCALE MRNA]</scope>
    <source>
        <strain>cv. Columbia</strain>
    </source>
</reference>
<reference key="4">
    <citation type="submission" date="2006-06" db="EMBL/GenBank/DDBJ databases">
        <title>Arabidopsis ORF clones.</title>
        <authorList>
            <person name="Shinn P."/>
            <person name="Chen H."/>
            <person name="Kim C.J."/>
            <person name="Quinitio C."/>
            <person name="Ecker J.R."/>
        </authorList>
    </citation>
    <scope>NUCLEOTIDE SEQUENCE [LARGE SCALE MRNA]</scope>
    <source>
        <strain>cv. Columbia</strain>
    </source>
</reference>
<reference key="5">
    <citation type="submission" date="2002-03" db="EMBL/GenBank/DDBJ databases">
        <title>Full-length cDNA from Arabidopsis thaliana.</title>
        <authorList>
            <person name="Brover V.V."/>
            <person name="Troukhan M.E."/>
            <person name="Alexandrov N.A."/>
            <person name="Lu Y.-P."/>
            <person name="Flavell R.B."/>
            <person name="Feldmann K.A."/>
        </authorList>
    </citation>
    <scope>NUCLEOTIDE SEQUENCE [LARGE SCALE MRNA]</scope>
</reference>
<reference key="6">
    <citation type="journal article" date="2004" name="Gene">
        <title>TDPOZ, a family of bipartite animal and plant proteins that contain the TRAF (TD) and POZ/BTB domains.</title>
        <authorList>
            <person name="Huang C.-J."/>
            <person name="Chen C.-Y."/>
            <person name="Chen H.-H."/>
            <person name="Tsai S.-F."/>
            <person name="Choo K.-B."/>
        </authorList>
    </citation>
    <scope>GENE FAMILY</scope>
</reference>
<reference key="7">
    <citation type="journal article" date="2005" name="Plant Physiol.">
        <title>Arabidopsis AtCUL3a and AtCUL3b form complexes with members of the BTB/POZ-MATH protein family.</title>
        <authorList>
            <person name="Weber H."/>
            <person name="Bernhardt A."/>
            <person name="Dieterle M."/>
            <person name="Hano P."/>
            <person name="Mutlu A."/>
            <person name="Estelle M."/>
            <person name="Genschik P."/>
            <person name="Hellmann H."/>
        </authorList>
    </citation>
    <scope>GENE FAMILY</scope>
    <scope>NOMENCLATURE</scope>
    <scope>SUBUNIT</scope>
    <scope>TISSUE SPECIFICITY</scope>
</reference>
<reference key="8">
    <citation type="journal article" date="2009" name="FEBS J.">
        <title>Arabidopsis thaliana BTB/ POZ-MATH proteins interact with members of the ERF/AP2 transcription factor family.</title>
        <authorList>
            <person name="Weber H."/>
            <person name="Hellmann H."/>
        </authorList>
    </citation>
    <scope>INTERACTION WITH RAP2-4</scope>
    <scope>TISSUE SPECIFICITY</scope>
    <scope>INDUCTION</scope>
    <scope>SUBCELLULAR LOCATION</scope>
</reference>
<reference key="9">
    <citation type="journal article" date="2014" name="Mol. Plant">
        <title>Identification of Arabidopsis MYB56 as a novel substrate for CRL3BPM E3 ligases.</title>
        <authorList>
            <person name="Chen L."/>
            <person name="Bernhardt A."/>
            <person name="Lee J."/>
            <person name="Hellmann H."/>
        </authorList>
    </citation>
    <scope>INTERACTION WITH MYB56</scope>
    <source>
        <strain>cv. Columbia</strain>
    </source>
</reference>